<name>PARP3_SOYBN</name>
<feature type="chain" id="PRO_0000260506" description="Protein ADP-ribosyltransferase PARP3">
    <location>
        <begin position="1"/>
        <end position="815"/>
    </location>
</feature>
<feature type="domain" description="PADR1 zinc-binding" evidence="7">
    <location>
        <begin position="39"/>
        <end position="179"/>
    </location>
</feature>
<feature type="domain" description="SAP" evidence="3">
    <location>
        <begin position="69"/>
        <end position="103"/>
    </location>
</feature>
<feature type="domain" description="BRCT" evidence="2">
    <location>
        <begin position="182"/>
        <end position="274"/>
    </location>
</feature>
<feature type="domain" description="WGR" evidence="6">
    <location>
        <begin position="322"/>
        <end position="422"/>
    </location>
</feature>
<feature type="domain" description="PARP alpha-helical" evidence="5">
    <location>
        <begin position="449"/>
        <end position="568"/>
    </location>
</feature>
<feature type="domain" description="PARP catalytic" evidence="4">
    <location>
        <begin position="577"/>
        <end position="808"/>
    </location>
</feature>
<feature type="region of interest" description="Disordered" evidence="8">
    <location>
        <begin position="1"/>
        <end position="52"/>
    </location>
</feature>
<feature type="region of interest" description="Zinc ribbon" evidence="7">
    <location>
        <begin position="106"/>
        <end position="150"/>
    </location>
</feature>
<feature type="region of interest" description="Disordered" evidence="8">
    <location>
        <begin position="726"/>
        <end position="749"/>
    </location>
</feature>
<feature type="compositionally biased region" description="Basic and acidic residues" evidence="8">
    <location>
        <begin position="1"/>
        <end position="51"/>
    </location>
</feature>
<feature type="compositionally biased region" description="Basic and acidic residues" evidence="8">
    <location>
        <begin position="726"/>
        <end position="739"/>
    </location>
</feature>
<feature type="binding site" evidence="7">
    <location>
        <position position="111"/>
    </location>
    <ligand>
        <name>Zn(2+)</name>
        <dbReference type="ChEBI" id="CHEBI:29105"/>
    </ligand>
</feature>
<feature type="binding site" evidence="7">
    <location>
        <position position="114"/>
    </location>
    <ligand>
        <name>Zn(2+)</name>
        <dbReference type="ChEBI" id="CHEBI:29105"/>
    </ligand>
</feature>
<feature type="binding site" evidence="7">
    <location>
        <position position="127"/>
    </location>
    <ligand>
        <name>Zn(2+)</name>
        <dbReference type="ChEBI" id="CHEBI:29105"/>
    </ligand>
</feature>
<feature type="binding site" evidence="7">
    <location>
        <position position="137"/>
    </location>
    <ligand>
        <name>Zn(2+)</name>
        <dbReference type="ChEBI" id="CHEBI:29105"/>
    </ligand>
</feature>
<dbReference type="EC" id="2.4.2.-" evidence="1"/>
<dbReference type="EMBL" id="AF169023">
    <property type="protein sequence ID" value="AAD51626.1"/>
    <property type="molecule type" value="mRNA"/>
</dbReference>
<dbReference type="RefSeq" id="NP_001237586.1">
    <property type="nucleotide sequence ID" value="NM_001250657.1"/>
</dbReference>
<dbReference type="SMR" id="Q9SWB4"/>
<dbReference type="STRING" id="3847.Q9SWB4"/>
<dbReference type="PaxDb" id="3847-GLYMA12G09390.1"/>
<dbReference type="EnsemblPlants" id="KRH25206">
    <property type="protein sequence ID" value="KRH25206"/>
    <property type="gene ID" value="GLYMA_12G088300"/>
</dbReference>
<dbReference type="GeneID" id="548024"/>
<dbReference type="Gramene" id="KRH25206">
    <property type="protein sequence ID" value="KRH25206"/>
    <property type="gene ID" value="GLYMA_12G088300"/>
</dbReference>
<dbReference type="KEGG" id="gmx:548024"/>
<dbReference type="eggNOG" id="KOG1037">
    <property type="taxonomic scope" value="Eukaryota"/>
</dbReference>
<dbReference type="InParanoid" id="Q9SWB4"/>
<dbReference type="OMA" id="TRPFIFR"/>
<dbReference type="OrthoDB" id="429950at2759"/>
<dbReference type="Proteomes" id="UP000008827">
    <property type="component" value="Chromosome 12"/>
</dbReference>
<dbReference type="GO" id="GO:0005730">
    <property type="term" value="C:nucleolus"/>
    <property type="evidence" value="ECO:0000318"/>
    <property type="project" value="GO_Central"/>
</dbReference>
<dbReference type="GO" id="GO:0003677">
    <property type="term" value="F:DNA binding"/>
    <property type="evidence" value="ECO:0007669"/>
    <property type="project" value="UniProtKB-KW"/>
</dbReference>
<dbReference type="GO" id="GO:0003950">
    <property type="term" value="F:NAD+ poly-ADP-ribosyltransferase activity"/>
    <property type="evidence" value="ECO:0000318"/>
    <property type="project" value="GO_Central"/>
</dbReference>
<dbReference type="GO" id="GO:0140806">
    <property type="term" value="F:NAD+-protein-aspartate ADP-ribosyltransferase activity"/>
    <property type="evidence" value="ECO:0007669"/>
    <property type="project" value="RHEA"/>
</dbReference>
<dbReference type="GO" id="GO:0140807">
    <property type="term" value="F:NAD+-protein-glutamate ADP-ribosyltransferase activity"/>
    <property type="evidence" value="ECO:0007669"/>
    <property type="project" value="RHEA"/>
</dbReference>
<dbReference type="GO" id="GO:0016779">
    <property type="term" value="F:nucleotidyltransferase activity"/>
    <property type="evidence" value="ECO:0007669"/>
    <property type="project" value="UniProtKB-KW"/>
</dbReference>
<dbReference type="GO" id="GO:0008270">
    <property type="term" value="F:zinc ion binding"/>
    <property type="evidence" value="ECO:0007669"/>
    <property type="project" value="UniProtKB-KW"/>
</dbReference>
<dbReference type="GO" id="GO:0006302">
    <property type="term" value="P:double-strand break repair"/>
    <property type="evidence" value="ECO:0000318"/>
    <property type="project" value="GO_Central"/>
</dbReference>
<dbReference type="CDD" id="cd17747">
    <property type="entry name" value="BRCT_PARP1"/>
    <property type="match status" value="1"/>
</dbReference>
<dbReference type="CDD" id="cd01437">
    <property type="entry name" value="parp_like"/>
    <property type="match status" value="1"/>
</dbReference>
<dbReference type="CDD" id="cd08001">
    <property type="entry name" value="WGR_PARP1_like"/>
    <property type="match status" value="1"/>
</dbReference>
<dbReference type="FunFam" id="1.20.142.10:FF:000004">
    <property type="entry name" value="Poly [ADP-ribose] polymerase"/>
    <property type="match status" value="1"/>
</dbReference>
<dbReference type="FunFam" id="3.40.50.10190:FF:000039">
    <property type="entry name" value="Poly [ADP-ribose] polymerase"/>
    <property type="match status" value="1"/>
</dbReference>
<dbReference type="FunFam" id="3.90.228.10:FF:000010">
    <property type="entry name" value="Poly [ADP-ribose] polymerase"/>
    <property type="match status" value="1"/>
</dbReference>
<dbReference type="FunFam" id="3.90.640.80:FF:000001">
    <property type="entry name" value="Poly [ADP-ribose] polymerase"/>
    <property type="match status" value="1"/>
</dbReference>
<dbReference type="Gene3D" id="3.90.228.10">
    <property type="match status" value="1"/>
</dbReference>
<dbReference type="Gene3D" id="3.90.640.80">
    <property type="match status" value="1"/>
</dbReference>
<dbReference type="Gene3D" id="3.40.50.10190">
    <property type="entry name" value="BRCT domain"/>
    <property type="match status" value="1"/>
</dbReference>
<dbReference type="Gene3D" id="1.20.142.10">
    <property type="entry name" value="Poly(ADP-ribose) polymerase, regulatory domain"/>
    <property type="match status" value="1"/>
</dbReference>
<dbReference type="InterPro" id="IPR050800">
    <property type="entry name" value="ARTD/PARP"/>
</dbReference>
<dbReference type="InterPro" id="IPR001357">
    <property type="entry name" value="BRCT_dom"/>
</dbReference>
<dbReference type="InterPro" id="IPR036420">
    <property type="entry name" value="BRCT_dom_sf"/>
</dbReference>
<dbReference type="InterPro" id="IPR049296">
    <property type="entry name" value="PARP1-like_PADR1_N"/>
</dbReference>
<dbReference type="InterPro" id="IPR012982">
    <property type="entry name" value="PARP1-like_PADR1_Zn_ribbon"/>
</dbReference>
<dbReference type="InterPro" id="IPR012317">
    <property type="entry name" value="Poly(ADP-ribose)pol_cat_dom"/>
</dbReference>
<dbReference type="InterPro" id="IPR004102">
    <property type="entry name" value="Poly(ADP-ribose)pol_reg_dom"/>
</dbReference>
<dbReference type="InterPro" id="IPR036616">
    <property type="entry name" value="Poly(ADP-ribose)pol_reg_dom_sf"/>
</dbReference>
<dbReference type="InterPro" id="IPR003034">
    <property type="entry name" value="SAP_dom"/>
</dbReference>
<dbReference type="InterPro" id="IPR036930">
    <property type="entry name" value="WGR_dom_sf"/>
</dbReference>
<dbReference type="InterPro" id="IPR008893">
    <property type="entry name" value="WGR_domain"/>
</dbReference>
<dbReference type="PANTHER" id="PTHR10459">
    <property type="entry name" value="DNA LIGASE"/>
    <property type="match status" value="1"/>
</dbReference>
<dbReference type="PANTHER" id="PTHR10459:SF106">
    <property type="entry name" value="PROTEIN ADP-RIBOSYLTRANSFERASE PARP3"/>
    <property type="match status" value="1"/>
</dbReference>
<dbReference type="Pfam" id="PF00533">
    <property type="entry name" value="BRCT"/>
    <property type="match status" value="1"/>
</dbReference>
<dbReference type="Pfam" id="PF21728">
    <property type="entry name" value="PADR1_N"/>
    <property type="match status" value="1"/>
</dbReference>
<dbReference type="Pfam" id="PF00644">
    <property type="entry name" value="PARP"/>
    <property type="match status" value="1"/>
</dbReference>
<dbReference type="Pfam" id="PF02877">
    <property type="entry name" value="PARP_reg"/>
    <property type="match status" value="1"/>
</dbReference>
<dbReference type="Pfam" id="PF05406">
    <property type="entry name" value="WGR"/>
    <property type="match status" value="1"/>
</dbReference>
<dbReference type="Pfam" id="PF08063">
    <property type="entry name" value="Zn_ribbon_PADR1"/>
    <property type="match status" value="1"/>
</dbReference>
<dbReference type="SMART" id="SM00292">
    <property type="entry name" value="BRCT"/>
    <property type="match status" value="1"/>
</dbReference>
<dbReference type="SMART" id="SM01335">
    <property type="entry name" value="PADR1"/>
    <property type="match status" value="1"/>
</dbReference>
<dbReference type="SMART" id="SM00773">
    <property type="entry name" value="WGR"/>
    <property type="match status" value="1"/>
</dbReference>
<dbReference type="SUPFAM" id="SSF56399">
    <property type="entry name" value="ADP-ribosylation"/>
    <property type="match status" value="1"/>
</dbReference>
<dbReference type="SUPFAM" id="SSF52113">
    <property type="entry name" value="BRCT domain"/>
    <property type="match status" value="1"/>
</dbReference>
<dbReference type="SUPFAM" id="SSF47587">
    <property type="entry name" value="Domain of poly(ADP-ribose) polymerase"/>
    <property type="match status" value="1"/>
</dbReference>
<dbReference type="SUPFAM" id="SSF142921">
    <property type="entry name" value="WGR domain-like"/>
    <property type="match status" value="1"/>
</dbReference>
<dbReference type="PROSITE" id="PS50172">
    <property type="entry name" value="BRCT"/>
    <property type="match status" value="1"/>
</dbReference>
<dbReference type="PROSITE" id="PS52007">
    <property type="entry name" value="PADR1"/>
    <property type="match status" value="1"/>
</dbReference>
<dbReference type="PROSITE" id="PS51060">
    <property type="entry name" value="PARP_ALPHA_HD"/>
    <property type="match status" value="1"/>
</dbReference>
<dbReference type="PROSITE" id="PS51059">
    <property type="entry name" value="PARP_CATALYTIC"/>
    <property type="match status" value="1"/>
</dbReference>
<dbReference type="PROSITE" id="PS50800">
    <property type="entry name" value="SAP"/>
    <property type="match status" value="1"/>
</dbReference>
<dbReference type="PROSITE" id="PS51977">
    <property type="entry name" value="WGR"/>
    <property type="match status" value="1"/>
</dbReference>
<comment type="function">
    <text evidence="1">Involved in the base excision repair (BER) pathway, by catalyzing the poly(ADP-ribosyl)ation of a limited number of acceptor proteins involved in chromatin architecture and in DNA metabolism. This modification follows DNA damages and appears as an obligatory step in a detection/signaling pathway leading to the reparation of DNA strand breaks (By similarity).</text>
</comment>
<comment type="catalytic activity">
    <reaction evidence="1">
        <text>L-aspartyl-[protein] + NAD(+) = 4-O-(ADP-D-ribosyl)-L-aspartyl-[protein] + nicotinamide</text>
        <dbReference type="Rhea" id="RHEA:54424"/>
        <dbReference type="Rhea" id="RHEA-COMP:9867"/>
        <dbReference type="Rhea" id="RHEA-COMP:13832"/>
        <dbReference type="ChEBI" id="CHEBI:17154"/>
        <dbReference type="ChEBI" id="CHEBI:29961"/>
        <dbReference type="ChEBI" id="CHEBI:57540"/>
        <dbReference type="ChEBI" id="CHEBI:138102"/>
    </reaction>
</comment>
<comment type="catalytic activity">
    <reaction evidence="1">
        <text>L-glutamyl-[protein] + NAD(+) = 5-O-(ADP-D-ribosyl)-L-glutamyl-[protein] + nicotinamide</text>
        <dbReference type="Rhea" id="RHEA:58224"/>
        <dbReference type="Rhea" id="RHEA-COMP:10208"/>
        <dbReference type="Rhea" id="RHEA-COMP:15089"/>
        <dbReference type="ChEBI" id="CHEBI:17154"/>
        <dbReference type="ChEBI" id="CHEBI:29973"/>
        <dbReference type="ChEBI" id="CHEBI:57540"/>
        <dbReference type="ChEBI" id="CHEBI:142540"/>
    </reaction>
</comment>
<comment type="subcellular location">
    <subcellularLocation>
        <location evidence="9">Nucleus</location>
    </subcellularLocation>
</comment>
<comment type="similarity">
    <text evidence="7 9">Belongs to the ARTD/PARP family.</text>
</comment>
<reference key="1">
    <citation type="submission" date="1999-07" db="EMBL/GenBank/DDBJ databases">
        <title>Characterization of a soybean seed maturation protein, PM38.</title>
        <authorList>
            <person name="Chow T.Y."/>
            <person name="Lin T.Y."/>
            <person name="Lin T.Y."/>
            <person name="Liu S.M."/>
            <person name="Hsing Y.I.C."/>
        </authorList>
    </citation>
    <scope>NUCLEOTIDE SEQUENCE [MRNA]</scope>
    <source>
        <strain>cv. Shi-shi</strain>
    </source>
</reference>
<protein>
    <recommendedName>
        <fullName evidence="1">Protein ADP-ribosyltransferase PARP3</fullName>
        <ecNumber evidence="1">2.4.2.-</ecNumber>
    </recommendedName>
    <alternativeName>
        <fullName>NAD(+) ADP-ribosyltransferase 3</fullName>
        <shortName>ADPRT-3</shortName>
    </alternativeName>
    <alternativeName>
        <fullName>Poly [ADP-ribose] polymerase 3</fullName>
        <shortName>PARP-3</shortName>
    </alternativeName>
    <alternativeName>
        <fullName>Poly[ADP-ribose] synthase 3</fullName>
    </alternativeName>
</protein>
<proteinExistence type="evidence at transcript level"/>
<keyword id="KW-0013">ADP-ribosylation</keyword>
<keyword id="KW-0238">DNA-binding</keyword>
<keyword id="KW-0328">Glycosyltransferase</keyword>
<keyword id="KW-0479">Metal-binding</keyword>
<keyword id="KW-0520">NAD</keyword>
<keyword id="KW-0548">Nucleotidyltransferase</keyword>
<keyword id="KW-0539">Nucleus</keyword>
<keyword id="KW-1185">Reference proteome</keyword>
<keyword id="KW-0808">Transferase</keyword>
<keyword id="KW-0862">Zinc</keyword>
<keyword id="KW-0863">Zinc-finger</keyword>
<gene>
    <name type="primary">PARP3</name>
    <name type="synonym">PM38</name>
</gene>
<evidence type="ECO:0000250" key="1">
    <source>
        <dbReference type="UniProtKB" id="Q9Y6F1"/>
    </source>
</evidence>
<evidence type="ECO:0000255" key="2">
    <source>
        <dbReference type="PROSITE-ProRule" id="PRU00033"/>
    </source>
</evidence>
<evidence type="ECO:0000255" key="3">
    <source>
        <dbReference type="PROSITE-ProRule" id="PRU00186"/>
    </source>
</evidence>
<evidence type="ECO:0000255" key="4">
    <source>
        <dbReference type="PROSITE-ProRule" id="PRU00397"/>
    </source>
</evidence>
<evidence type="ECO:0000255" key="5">
    <source>
        <dbReference type="PROSITE-ProRule" id="PRU00398"/>
    </source>
</evidence>
<evidence type="ECO:0000255" key="6">
    <source>
        <dbReference type="PROSITE-ProRule" id="PRU01321"/>
    </source>
</evidence>
<evidence type="ECO:0000255" key="7">
    <source>
        <dbReference type="PROSITE-ProRule" id="PRU01351"/>
    </source>
</evidence>
<evidence type="ECO:0000256" key="8">
    <source>
        <dbReference type="SAM" id="MobiDB-lite"/>
    </source>
</evidence>
<evidence type="ECO:0000305" key="9"/>
<sequence length="815" mass="91689">MKVQETRSHVHALGEEEKVMTRKQKAESKAHEVEHSPKKAKVEKEDGHINGKSETGVAEEYDEFCKATTEHLPLEQMRDILEANGLDSSGSDLEITRRCQDLLFYGALDKCSVCNGSLEFDGRRYVCRGFYSEWASCTFSTRNPPRKQEPIKLPDSVQNSLASDLLKKYQDPSHRPHRDLGLAEKPFTGMMISLMGRLTRTHHYWKTTIEKHGGKVANSIIGSTCLVASPAERERGGTSKLAEAMERSIPVVREAWLIDSIEKQEPQPLEAYDLVSDLSVDGKGIPWDKQDPGEEAIESLSAELKLYGKRGVYKDTKLQEQGGKIFERDGILYNCAFSVCDQGRGLNDYCVMQLIVVPENRLHLYFKKGRVGDDPNAEERLEEWDNVDGALKEFVRLFEEITGNEFEPWEREKKFQKKPLKFYPIDMDDGIEVRHGALGLRQLGIAATHCKLEPLVANFMKVLCSQEIYKYALMEMGYDCPDLPIGMVTNLHLKKCEDVLLEFIDKVKSLKETGPKAEAVWTDFSQRWFTLMHSTRPFNFRDYQEIADHAAAALEGVRDITQASHLIGDMTGSTIDDPLSETYKKLGCSISALDKSSDDYEMIVKYLEKTYEPVKVGDIEYGVSVENIFAVQTGGCPSYEDIIKLPNKVLLWCGSRSSNLLRHLQKGFLPAICSLPIPGYMFGKAIVCSDAAAEAARYGFTAVDRPEGFLVLAIASLGNEITELKTPPEDASSLEEKKVGVKGPGKKKTDESEHFVWKDDIKVPCGKLVASDHQDSPLEYNEYAVYDKKRARISYLVGVKYEEKEEKGAVIDTAE</sequence>
<accession>Q9SWB4</accession>
<organism>
    <name type="scientific">Glycine max</name>
    <name type="common">Soybean</name>
    <name type="synonym">Glycine hispida</name>
    <dbReference type="NCBI Taxonomy" id="3847"/>
    <lineage>
        <taxon>Eukaryota</taxon>
        <taxon>Viridiplantae</taxon>
        <taxon>Streptophyta</taxon>
        <taxon>Embryophyta</taxon>
        <taxon>Tracheophyta</taxon>
        <taxon>Spermatophyta</taxon>
        <taxon>Magnoliopsida</taxon>
        <taxon>eudicotyledons</taxon>
        <taxon>Gunneridae</taxon>
        <taxon>Pentapetalae</taxon>
        <taxon>rosids</taxon>
        <taxon>fabids</taxon>
        <taxon>Fabales</taxon>
        <taxon>Fabaceae</taxon>
        <taxon>Papilionoideae</taxon>
        <taxon>50 kb inversion clade</taxon>
        <taxon>NPAAA clade</taxon>
        <taxon>indigoferoid/millettioid clade</taxon>
        <taxon>Phaseoleae</taxon>
        <taxon>Glycine</taxon>
        <taxon>Glycine subgen. Soja</taxon>
    </lineage>
</organism>